<accession>P00829</accession>
<accession>Q1JQA9</accession>
<accession>Q9T2U4</accession>
<accession>Q9T2U5</accession>
<protein>
    <recommendedName>
        <fullName evidence="2">ATP synthase F(1) complex catalytic subunit beta, mitochondrial</fullName>
        <ecNumber evidence="12 18">7.1.2.2</ecNumber>
    </recommendedName>
    <alternativeName>
        <fullName evidence="2">ATP synthase F1 subunit beta</fullName>
    </alternativeName>
</protein>
<sequence length="528" mass="56284">MLGLVGRVVAASASGALRGLSPSAPLPQAQLLLRAAPAALQPARDYAAQASPSPKAGATTGRIVAVIGAVVDVQFDEGLPPILNALEVQGRETRLVLEVAQHLGESTVRTIAMDGTEGLVRGQKVLDSGAPIRIPVGPETLGRIMNVIGEPIDERGPIKTKQFAAIHAEAPEFVEMSVEQEILVTGIKVVDLLAPYAKGGKIGLFGGAGVGKTVLIMELINNVAKAHGGYSVFAGVGERTREGNDLYHEMIESGVINLKDATSKVALVYGQMNEPPGARARVALTGLTVAEYFRDQEGQDVLLFIDNIFRFTQAGSEVSALLGRIPSAVGYQPTLATDMGTMQERITTTKKGSITSVQAIYVPADDLTDPAPATTFAHLDATTVLSRAIAELGIYPAVDPLDSTSRIMDPNIVGSEHYDVARGVQKILQDYKSLQDIIAILGMDELSEEDKLTVSRARKIQRFLSQPFQVAEVFTGHLGKLVPLKETIKGFQQILAGEYDHLPEQAFYMVGPIEEAVAKADKLAEEHS</sequence>
<gene>
    <name evidence="2" type="primary">ATP5F1B</name>
    <name type="synonym">ATP5B</name>
</gene>
<reference key="1">
    <citation type="journal article" date="1988" name="Biochemistry">
        <title>Isolation and characterization of a complementary DNA for the nuclear-coded precursor of the beta-subunit of bovine mitochondrial F1-ATPase.</title>
        <authorList>
            <person name="Breen G.A.M."/>
            <person name="Holmans P.L."/>
            <person name="Garnett K.E."/>
        </authorList>
    </citation>
    <scope>NUCLEOTIDE SEQUENCE [MRNA]</scope>
</reference>
<reference key="2">
    <citation type="submission" date="2006-05" db="EMBL/GenBank/DDBJ databases">
        <authorList>
            <consortium name="NIH - Mammalian Gene Collection (MGC) project"/>
        </authorList>
    </citation>
    <scope>NUCLEOTIDE SEQUENCE [LARGE SCALE MRNA]</scope>
    <source>
        <strain>Hereford</strain>
        <tissue>Ascending colon</tissue>
    </source>
</reference>
<reference key="3">
    <citation type="journal article" date="1983" name="J. Biol. Chem.">
        <title>The amino acid sequence of the beta-subunit of ATP synthase from bovine heart mitochondria.</title>
        <authorList>
            <person name="Runswick M.J."/>
            <person name="Walker J.E."/>
        </authorList>
    </citation>
    <scope>PROTEIN SEQUENCE OF 51-528</scope>
</reference>
<reference key="4">
    <citation type="journal article" date="1985" name="J. Mol. Biol.">
        <title>Primary structure and subunit stoichiometry of F1-ATPase from bovine mitochondria.</title>
        <authorList>
            <person name="Walker J.E."/>
            <person name="Fearnley I.M."/>
            <person name="Gay N.J."/>
            <person name="Gibson B.W."/>
            <person name="Northrop F.D."/>
            <person name="Powell S.J."/>
            <person name="Runswick M.J."/>
            <person name="Saraste M."/>
            <person name="Tybulewicz V.L.J."/>
        </authorList>
    </citation>
    <scope>PROTEIN SEQUENCE OF 49-528</scope>
</reference>
<reference key="5">
    <citation type="journal article" date="1987" name="Curr. Genet.">
        <title>Sequence analysis of cDNAs for the human and bovine ATP synthase beta subunit: mitochondrial DNA genes sustain seventeen times more mutations.</title>
        <authorList>
            <person name="Wallace D.C."/>
            <person name="Ye J."/>
            <person name="Neckelmann S.N."/>
            <person name="Singh G."/>
            <person name="Webster K.A."/>
            <person name="Greenberg B.D."/>
        </authorList>
    </citation>
    <scope>NUCLEOTIDE SEQUENCE [MRNA] OF 172-528</scope>
    <source>
        <tissue>Heart</tissue>
    </source>
</reference>
<reference key="6">
    <citation type="journal article" date="1991" name="Biochemistry">
        <title>Identification of the subunits of F1F0-ATPase from bovine heart mitochondria.</title>
        <authorList>
            <person name="Walker J.E."/>
            <person name="Lutter R."/>
            <person name="Dupuis A."/>
            <person name="Runswick M.J."/>
        </authorList>
    </citation>
    <scope>PROTEIN SEQUENCE OF 47-55</scope>
    <source>
        <tissue>Heart</tissue>
    </source>
</reference>
<reference key="7">
    <citation type="journal article" date="1991" name="Eur. J. Biochem.">
        <title>When beef-heart mitochondrial F1-ATPase is inhibited by inhibitor protein a nucleotide is trapped in one of the catalytic sites.</title>
        <authorList>
            <person name="Milgrom Y.M."/>
        </authorList>
    </citation>
    <scope>PROTEIN SEQUENCE OF 388-422</scope>
    <source>
        <tissue>Heart</tissue>
    </source>
</reference>
<reference key="8">
    <citation type="journal article" date="1983" name="J. Biol. Chem.">
        <title>The sites of labeling of the beta-subunit of bovine mitochondrial F1-ATPase with 8-azido-ATP.</title>
        <authorList>
            <person name="Hollemans M."/>
            <person name="Runswick M.J."/>
            <person name="Fearnley I.M."/>
            <person name="Walker J.E."/>
        </authorList>
    </citation>
    <scope>ATP-BINDING SITE</scope>
</reference>
<reference key="9">
    <citation type="journal article" date="1988" name="Anal. Biochem.">
        <title>Structural elucidation of N-terminal post-translational modifications by mass spectrometry: application to chicken enolase and the alpha- and beta-subunits of bovine mitochondrial F1-ATPase.</title>
        <authorList>
            <person name="Gibson B.W."/>
            <person name="Daley D.J."/>
            <person name="Williams D.H."/>
        </authorList>
    </citation>
    <scope>PROTEIN SEQUENCE OF N-TERMINUS</scope>
</reference>
<reference key="10">
    <citation type="journal article" date="1979" name="Cell Biophys.">
        <title>Visualization of mitochondrial coupling factor F1(ATPase) by freeze-drying.</title>
        <authorList>
            <person name="Sikerwar S.S."/>
            <person name="Malhotra S.K."/>
        </authorList>
    </citation>
    <scope>SUBCELLULAR LOCATION</scope>
    <scope>TOPOLOGY</scope>
</reference>
<reference key="11">
    <citation type="journal article" date="2003" name="EMBO J.">
        <title>Structure of the mitochondrial ATP synthase by electron cryomicroscopy.</title>
        <authorList>
            <person name="Rubinstein J.L."/>
            <person name="Walker J.E."/>
            <person name="Henderson R."/>
        </authorList>
    </citation>
    <scope>SUBCELLULAR LOCATION</scope>
    <scope>TOPOLOGY</scope>
</reference>
<reference key="12">
    <citation type="journal article" date="2007" name="FEBS Lett.">
        <title>Association of two proteolipids of unknown function with ATP synthase from bovine heart mitochondria.</title>
        <authorList>
            <person name="Chen R."/>
            <person name="Runswick M.J."/>
            <person name="Carroll J."/>
            <person name="Fearnley I.M."/>
            <person name="Walker J.E."/>
        </authorList>
    </citation>
    <scope>IDENTIFICATION IN THE ATP SYNTHASE COMPLEX</scope>
</reference>
<reference key="13">
    <citation type="journal article" date="2009" name="J. Biol. Chem.">
        <title>Cyclophilin D modulates mitochondrial F0F1-ATP synthase by interacting with the lateral stalk of the complex.</title>
        <authorList>
            <person name="Giorgio V."/>
            <person name="Bisetto E."/>
            <person name="Soriano M.E."/>
            <person name="Dabbeni-Sala F."/>
            <person name="Basso E."/>
            <person name="Petronilli V."/>
            <person name="Forte M.A."/>
            <person name="Bernardi P."/>
            <person name="Lippe G."/>
        </authorList>
    </citation>
    <scope>INTERACTION WITH PPIF</scope>
</reference>
<reference key="14">
    <citation type="journal article" date="2013" name="Open Biol.">
        <title>The affinity purification and characterization of ATP synthase complexes from mitochondria.</title>
        <authorList>
            <person name="Runswick M.J."/>
            <person name="Bason J.V."/>
            <person name="Montgomery M.G."/>
            <person name="Robinson G.C."/>
            <person name="Fearnley I.M."/>
            <person name="Walker J.E."/>
        </authorList>
    </citation>
    <scope>FUNCTION</scope>
    <scope>IDENTIFICATION IN THE ATP SYNTHASE COMPLEX</scope>
    <scope>SUBCELLULAR LOCATION</scope>
    <scope>SUBUNIT</scope>
    <scope>CATALYTIC ACTIVITY</scope>
</reference>
<reference key="15">
    <citation type="journal article" date="2015" name="J. Biol. Chem.">
        <title>Organization of Subunits in the Membrane Domain of the Bovine F-ATPase Revealed by Covalent Cross-linking.</title>
        <authorList>
            <person name="Lee J."/>
            <person name="Ding S."/>
            <person name="Walpole T.B."/>
            <person name="Holding A.N."/>
            <person name="Montgomery M.G."/>
            <person name="Fearnley I.M."/>
            <person name="Walker J.E."/>
        </authorList>
    </citation>
    <scope>IDENTIFICATION BY MASS SPECTROMETRY</scope>
    <scope>IDENTIFICATION IN THE ATP SYNTHASE COMPLEX</scope>
</reference>
<reference evidence="22" key="16">
    <citation type="journal article" date="1994" name="Nature">
        <title>Structure at 2.8-A resolution of F1-ATPase from bovine heart mitochondria.</title>
        <authorList>
            <person name="Abrahams J.P."/>
            <person name="Leslie A.G.W."/>
            <person name="Lutter R."/>
            <person name="Walker J.E."/>
        </authorList>
    </citation>
    <scope>X-RAY CRYSTALLOGRAPHY (2.85 ANGSTROMS) OF 47-528 IN COMPLEX WITH ATP ANALOG</scope>
    <scope>SUBCELLULAR LOCATION</scope>
    <scope>SUBUNIT</scope>
</reference>
<reference evidence="24" key="17">
    <citation type="journal article" date="1996" name="Proc. Natl. Acad. Sci. U.S.A.">
        <title>The structure of bovine F1-ATPase complexed with the peptide antibiotic efrapeptin.</title>
        <authorList>
            <person name="Abrahams J.P."/>
            <person name="Buchanan S.K."/>
            <person name="van Raaij M.J."/>
            <person name="Fearnley I.M."/>
            <person name="Leslie A.G."/>
            <person name="Walker J.E."/>
        </authorList>
    </citation>
    <scope>X-RAY CRYSTALLOGRAPHY (3.10 ANGSTROMS) OF 47-528 IN COMPLEX WITH ATP ANALOG</scope>
    <scope>SUBUNIT</scope>
</reference>
<reference evidence="26" key="18">
    <citation type="journal article" date="1998" name="Structure">
        <title>Bovine F1-ATPase covalently inhibited with 4-chloro-7-nitrobenzofurazan: the structure provides further support for a rotary catalytic mechanism.</title>
        <authorList>
            <person name="Orriss G.L."/>
            <person name="Leslie A.G."/>
            <person name="Braig K."/>
            <person name="Walker J.E."/>
        </authorList>
    </citation>
    <scope>X-RAY CRYSTALLOGRAPHY (3.00 ANGSTROMS) OF 47-526 IN COMPLEX WITH ADP AND ATP</scope>
    <scope>FUNCTION</scope>
    <scope>SUBUNIT</scope>
    <scope>CATALYTIC ACTIVITY</scope>
</reference>
<reference evidence="27" key="19">
    <citation type="journal article" date="2003" name="Nat. Struct. Biol.">
        <title>The structure of bovine F1-ATPase in complex with its regulatory protein IF1.</title>
        <authorList>
            <person name="Cabezon E."/>
            <person name="Montgomery M.G."/>
            <person name="Leslie A.G."/>
            <person name="Walker J.E."/>
        </authorList>
    </citation>
    <scope>X-RAY CRYSTALLOGRAPHY (2.8 ANGSTROMS) OF 47-528 IN COMPLEX WITH ATP ANALOG; ATPIF1; ATP5F1A AND ATP5F1C</scope>
    <scope>SUBUNIT</scope>
</reference>
<reference evidence="29" key="20">
    <citation type="journal article" date="2007" name="Proc. Natl. Acad. Sci. U.S.A.">
        <title>How the regulatory protein, IF(1), inhibits F(1)-ATPase from bovine mitochondria.</title>
        <authorList>
            <person name="Gledhill J.R."/>
            <person name="Montgomery M.G."/>
            <person name="Leslie A.G."/>
            <person name="Walker J.E."/>
        </authorList>
    </citation>
    <scope>X-RAY CRYSTALLOGRAPHY (2.1 ANGSTROMS) OF 47-528 IN COMPLEX WITH ATPIF1; ATP5F1A; ATP5F1C; ATP5F1D AND ATP5F1E</scope>
    <scope>SUBUNIT</scope>
</reference>
<name>ATPB_BOVIN</name>
<organism>
    <name type="scientific">Bos taurus</name>
    <name type="common">Bovine</name>
    <dbReference type="NCBI Taxonomy" id="9913"/>
    <lineage>
        <taxon>Eukaryota</taxon>
        <taxon>Metazoa</taxon>
        <taxon>Chordata</taxon>
        <taxon>Craniata</taxon>
        <taxon>Vertebrata</taxon>
        <taxon>Euteleostomi</taxon>
        <taxon>Mammalia</taxon>
        <taxon>Eutheria</taxon>
        <taxon>Laurasiatheria</taxon>
        <taxon>Artiodactyla</taxon>
        <taxon>Ruminantia</taxon>
        <taxon>Pecora</taxon>
        <taxon>Bovidae</taxon>
        <taxon>Bovinae</taxon>
        <taxon>Bos</taxon>
    </lineage>
</organism>
<feature type="transit peptide" description="Mitochondrion" evidence="10">
    <location>
        <begin position="1"/>
        <end position="46"/>
    </location>
</feature>
<feature type="chain" id="PRO_0000002442" description="ATP synthase F(1) complex catalytic subunit beta, mitochondrial">
    <location>
        <begin position="47"/>
        <end position="528"/>
    </location>
</feature>
<feature type="binding site" evidence="9 15 16 18 22 24 26 29">
    <location>
        <position position="209"/>
    </location>
    <ligand>
        <name>ADP</name>
        <dbReference type="ChEBI" id="CHEBI:456216"/>
    </ligand>
</feature>
<feature type="binding site" evidence="18 26">
    <location>
        <position position="209"/>
    </location>
    <ligand>
        <name>ATP</name>
        <dbReference type="ChEBI" id="CHEBI:30616"/>
    </ligand>
</feature>
<feature type="binding site" evidence="9 18 26 29">
    <location>
        <position position="209"/>
    </location>
    <ligand>
        <name>phosphate</name>
        <dbReference type="ChEBI" id="CHEBI:43474"/>
    </ligand>
</feature>
<feature type="binding site" evidence="9 15 16 18 22 24 26 29">
    <location>
        <position position="210"/>
    </location>
    <ligand>
        <name>ADP</name>
        <dbReference type="ChEBI" id="CHEBI:456216"/>
    </ligand>
</feature>
<feature type="binding site" evidence="9 18 26 29">
    <location>
        <position position="210"/>
    </location>
    <ligand>
        <name>phosphate</name>
        <dbReference type="ChEBI" id="CHEBI:43474"/>
    </ligand>
</feature>
<feature type="binding site" evidence="9 15 16 18 22 24 26 29">
    <location>
        <position position="211"/>
    </location>
    <ligand>
        <name>ADP</name>
        <dbReference type="ChEBI" id="CHEBI:456216"/>
    </ligand>
</feature>
<feature type="binding site" evidence="18 26">
    <location>
        <position position="211"/>
    </location>
    <ligand>
        <name>ATP</name>
        <dbReference type="ChEBI" id="CHEBI:30616"/>
    </ligand>
</feature>
<feature type="binding site" evidence="9 18 26 29">
    <location>
        <position position="211"/>
    </location>
    <ligand>
        <name>phosphate</name>
        <dbReference type="ChEBI" id="CHEBI:43474"/>
    </ligand>
</feature>
<feature type="binding site" evidence="9 15 16 18 22 24 26 29">
    <location>
        <position position="212"/>
    </location>
    <ligand>
        <name>ADP</name>
        <dbReference type="ChEBI" id="CHEBI:456216"/>
    </ligand>
</feature>
<feature type="binding site" evidence="18 26">
    <location>
        <position position="212"/>
    </location>
    <ligand>
        <name>ATP</name>
        <dbReference type="ChEBI" id="CHEBI:30616"/>
    </ligand>
</feature>
<feature type="binding site" evidence="9 18 26 29">
    <location>
        <position position="212"/>
    </location>
    <ligand>
        <name>phosphate</name>
        <dbReference type="ChEBI" id="CHEBI:43474"/>
    </ligand>
</feature>
<feature type="binding site" evidence="9 15 16 18 22 24 26 29">
    <location>
        <position position="213"/>
    </location>
    <ligand>
        <name>ADP</name>
        <dbReference type="ChEBI" id="CHEBI:456216"/>
    </ligand>
</feature>
<feature type="binding site" evidence="18 26">
    <location>
        <position position="213"/>
    </location>
    <ligand>
        <name>ATP</name>
        <dbReference type="ChEBI" id="CHEBI:30616"/>
    </ligand>
</feature>
<feature type="binding site" evidence="6 9 15 16 18 28 29 32">
    <location>
        <position position="213"/>
    </location>
    <ligand>
        <name>Mg(2+)</name>
        <dbReference type="ChEBI" id="CHEBI:18420"/>
        <label>1</label>
        <note>ligand shared between two neighboring subunits</note>
    </ligand>
</feature>
<feature type="binding site" evidence="9 18 26 29">
    <location>
        <position position="213"/>
    </location>
    <ligand>
        <name>phosphate</name>
        <dbReference type="ChEBI" id="CHEBI:43474"/>
    </ligand>
</feature>
<feature type="binding site" evidence="9 15 16 18 22 24 26 29">
    <location>
        <position position="214"/>
    </location>
    <ligand>
        <name>ADP</name>
        <dbReference type="ChEBI" id="CHEBI:456216"/>
    </ligand>
</feature>
<feature type="binding site" evidence="18 26">
    <location>
        <position position="214"/>
    </location>
    <ligand>
        <name>ATP</name>
        <dbReference type="ChEBI" id="CHEBI:30616"/>
    </ligand>
</feature>
<feature type="binding site" evidence="23 25 30 31">
    <location>
        <position position="238"/>
    </location>
    <ligand>
        <name>Mg(2+)</name>
        <dbReference type="ChEBI" id="CHEBI:18420"/>
        <label>2</label>
        <note>ligand shared between two neighboring subunits</note>
    </ligand>
</feature>
<feature type="binding site" evidence="18 26">
    <location>
        <position position="239"/>
    </location>
    <ligand>
        <name>ATP</name>
        <dbReference type="ChEBI" id="CHEBI:30616"/>
    </ligand>
</feature>
<feature type="modified residue" description="N6-acetyllysine; alternate" evidence="5">
    <location>
        <position position="124"/>
    </location>
</feature>
<feature type="modified residue" description="N6-succinyllysine; alternate" evidence="5">
    <location>
        <position position="124"/>
    </location>
</feature>
<feature type="modified residue" description="N6-acetyllysine; alternate" evidence="5">
    <location>
        <position position="161"/>
    </location>
</feature>
<feature type="modified residue" description="N6-succinyllysine; alternate" evidence="5">
    <location>
        <position position="161"/>
    </location>
</feature>
<feature type="modified residue" description="N6-acetyllysine" evidence="2">
    <location>
        <position position="198"/>
    </location>
</feature>
<feature type="modified residue" description="N6-acetyllysine; alternate" evidence="5">
    <location>
        <position position="259"/>
    </location>
</feature>
<feature type="modified residue" description="N6-succinyllysine; alternate" evidence="5">
    <location>
        <position position="259"/>
    </location>
</feature>
<feature type="modified residue" description="N6-acetyllysine; alternate" evidence="5">
    <location>
        <position position="264"/>
    </location>
</feature>
<feature type="modified residue" description="N6-succinyllysine; alternate" evidence="5">
    <location>
        <position position="264"/>
    </location>
</feature>
<feature type="modified residue" description="Phosphothreonine" evidence="5">
    <location>
        <position position="312"/>
    </location>
</feature>
<feature type="modified residue" description="Phosphoserine" evidence="2">
    <location>
        <position position="415"/>
    </location>
</feature>
<feature type="modified residue" description="N6-acetyllysine" evidence="2">
    <location>
        <position position="426"/>
    </location>
</feature>
<feature type="modified residue" description="Phosphoserine" evidence="3">
    <location>
        <position position="433"/>
    </location>
</feature>
<feature type="modified residue" description="N6-acetyllysine" evidence="5">
    <location>
        <position position="480"/>
    </location>
</feature>
<feature type="modified residue" description="N6-acetyllysine" evidence="5">
    <location>
        <position position="485"/>
    </location>
</feature>
<feature type="modified residue" description="N6-acetyllysine; alternate" evidence="5">
    <location>
        <position position="522"/>
    </location>
</feature>
<feature type="modified residue" description="N6-succinyllysine; alternate" evidence="5">
    <location>
        <position position="522"/>
    </location>
</feature>
<feature type="glycosylation site" description="O-linked (GlcNAc) serine" evidence="1">
    <location>
        <position position="106"/>
    </location>
</feature>
<feature type="sequence variant" description="In some mature chains.">
    <location>
        <begin position="49"/>
        <end position="50"/>
    </location>
</feature>
<feature type="sequence conflict" description="In Ref. 3; AA sequence and 4; AA sequence." evidence="19" ref="3 4">
    <original>I</original>
    <variation>L</variation>
    <location>
        <position position="182"/>
    </location>
</feature>
<feature type="sequence conflict" description="In Ref. 3; AA sequence and 4; AA sequence." evidence="19" ref="3 4">
    <original>I</original>
    <variation>D</variation>
    <location>
        <position position="187"/>
    </location>
</feature>
<feature type="sequence conflict" description="In Ref. 5; CAA29094." evidence="19" ref="5">
    <original>Y</original>
    <variation>I</variation>
    <location>
        <position position="196"/>
    </location>
</feature>
<feature type="sequence conflict" description="In Ref. 3; AA sequence and 4; AA sequence." evidence="19" ref="3 4">
    <original>L</original>
    <variation>F</variation>
    <location>
        <position position="215"/>
    </location>
</feature>
<feature type="sequence conflict" description="In Ref. 3; AA sequence and 4; AA sequence." evidence="19" ref="3 4">
    <original>E</original>
    <variation>Q</variation>
    <location>
        <position position="274"/>
    </location>
</feature>
<feature type="sequence conflict" description="In Ref. 3; AA sequence and 4; AA sequence." evidence="19" ref="3 4">
    <original>D</original>
    <variation>N</variation>
    <location>
        <position position="338"/>
    </location>
</feature>
<feature type="sequence conflict" description="In Ref. 3; AA sequence and 4; AA sequence." evidence="19" ref="3 4">
    <original>T</original>
    <variation>V</variation>
    <location>
        <position position="374"/>
    </location>
</feature>
<feature type="sequence conflict" description="In Ref. 3; AA sequence and 4; AA sequence." evidence="19" ref="3 4">
    <original>D</original>
    <variation>N</variation>
    <location>
        <position position="409"/>
    </location>
</feature>
<feature type="strand" evidence="33">
    <location>
        <begin position="60"/>
        <end position="67"/>
    </location>
</feature>
<feature type="strand" evidence="33">
    <location>
        <begin position="70"/>
        <end position="78"/>
    </location>
</feature>
<feature type="strand" evidence="33">
    <location>
        <begin position="85"/>
        <end position="90"/>
    </location>
</feature>
<feature type="strand" evidence="33">
    <location>
        <begin position="96"/>
        <end position="104"/>
    </location>
</feature>
<feature type="strand" evidence="33">
    <location>
        <begin position="107"/>
        <end position="114"/>
    </location>
</feature>
<feature type="strand" evidence="33">
    <location>
        <begin position="124"/>
        <end position="127"/>
    </location>
</feature>
<feature type="strand" evidence="33">
    <location>
        <begin position="129"/>
        <end position="131"/>
    </location>
</feature>
<feature type="strand" evidence="33">
    <location>
        <begin position="133"/>
        <end position="137"/>
    </location>
</feature>
<feature type="helix" evidence="33">
    <location>
        <begin position="138"/>
        <end position="140"/>
    </location>
</feature>
<feature type="strand" evidence="34">
    <location>
        <begin position="147"/>
        <end position="149"/>
    </location>
</feature>
<feature type="strand" evidence="33">
    <location>
        <begin position="153"/>
        <end position="155"/>
    </location>
</feature>
<feature type="strand" evidence="33">
    <location>
        <begin position="161"/>
        <end position="166"/>
    </location>
</feature>
<feature type="helix" evidence="33">
    <location>
        <begin position="173"/>
        <end position="175"/>
    </location>
</feature>
<feature type="helix" evidence="33">
    <location>
        <begin position="188"/>
        <end position="193"/>
    </location>
</feature>
<feature type="strand" evidence="33">
    <location>
        <begin position="201"/>
        <end position="206"/>
    </location>
</feature>
<feature type="strand" evidence="35">
    <location>
        <begin position="208"/>
        <end position="211"/>
    </location>
</feature>
<feature type="helix" evidence="33">
    <location>
        <begin position="212"/>
        <end position="222"/>
    </location>
</feature>
<feature type="turn" evidence="33">
    <location>
        <begin position="223"/>
        <end position="226"/>
    </location>
</feature>
<feature type="strand" evidence="33">
    <location>
        <begin position="228"/>
        <end position="238"/>
    </location>
</feature>
<feature type="helix" evidence="33">
    <location>
        <begin position="240"/>
        <end position="253"/>
    </location>
</feature>
<feature type="strand" evidence="33">
    <location>
        <begin position="254"/>
        <end position="256"/>
    </location>
</feature>
<feature type="strand" evidence="33">
    <location>
        <begin position="258"/>
        <end position="261"/>
    </location>
</feature>
<feature type="strand" evidence="33">
    <location>
        <begin position="265"/>
        <end position="270"/>
    </location>
</feature>
<feature type="helix" evidence="33">
    <location>
        <begin position="276"/>
        <end position="295"/>
    </location>
</feature>
<feature type="strand" evidence="33">
    <location>
        <begin position="300"/>
        <end position="306"/>
    </location>
</feature>
<feature type="helix" evidence="33">
    <location>
        <begin position="309"/>
        <end position="317"/>
    </location>
</feature>
<feature type="helix" evidence="33">
    <location>
        <begin position="320"/>
        <end position="322"/>
    </location>
</feature>
<feature type="helix" evidence="33">
    <location>
        <begin position="328"/>
        <end position="330"/>
    </location>
</feature>
<feature type="helix" evidence="33">
    <location>
        <begin position="335"/>
        <end position="343"/>
    </location>
</feature>
<feature type="strand" evidence="35">
    <location>
        <begin position="349"/>
        <end position="351"/>
    </location>
</feature>
<feature type="strand" evidence="33">
    <location>
        <begin position="353"/>
        <end position="361"/>
    </location>
</feature>
<feature type="helix" evidence="33">
    <location>
        <begin position="363"/>
        <end position="365"/>
    </location>
</feature>
<feature type="helix" evidence="33">
    <location>
        <begin position="370"/>
        <end position="375"/>
    </location>
</feature>
<feature type="helix" evidence="33">
    <location>
        <begin position="376"/>
        <end position="378"/>
    </location>
</feature>
<feature type="strand" evidence="33">
    <location>
        <begin position="380"/>
        <end position="385"/>
    </location>
</feature>
<feature type="helix" evidence="33">
    <location>
        <begin position="387"/>
        <end position="390"/>
    </location>
</feature>
<feature type="turn" evidence="33">
    <location>
        <begin position="391"/>
        <end position="393"/>
    </location>
</feature>
<feature type="turn" evidence="33">
    <location>
        <begin position="400"/>
        <end position="402"/>
    </location>
</feature>
<feature type="helix" evidence="33">
    <location>
        <begin position="410"/>
        <end position="413"/>
    </location>
</feature>
<feature type="helix" evidence="33">
    <location>
        <begin position="415"/>
        <end position="441"/>
    </location>
</feature>
<feature type="helix" evidence="33">
    <location>
        <begin position="443"/>
        <end position="445"/>
    </location>
</feature>
<feature type="helix" evidence="33">
    <location>
        <begin position="450"/>
        <end position="463"/>
    </location>
</feature>
<feature type="helix" evidence="33">
    <location>
        <begin position="472"/>
        <end position="475"/>
    </location>
</feature>
<feature type="helix" evidence="33">
    <location>
        <begin position="484"/>
        <end position="496"/>
    </location>
</feature>
<feature type="turn" evidence="33">
    <location>
        <begin position="497"/>
        <end position="501"/>
    </location>
</feature>
<feature type="helix" evidence="33">
    <location>
        <begin position="504"/>
        <end position="506"/>
    </location>
</feature>
<feature type="helix" evidence="33">
    <location>
        <begin position="513"/>
        <end position="522"/>
    </location>
</feature>
<comment type="function">
    <text evidence="2 4 6 8 9 12 13 18">Catalytic subunit beta, of the mitochondrial membrane ATP synthase complex (F(1)F(0) ATP synthase or Complex V) that produces ATP from ADP in the presence of a proton gradient across the membrane which is generated by electron transport complexes of the respiratory chain (PubMed:23407638, PubMed:9687365). ATP synthase complex consist of a soluble F(1) head domain - the catalytic core - and a membrane F(1) domain - the membrane proton channel (PubMed:12923572, PubMed:17570365, PubMed:17895376, PubMed:25851905). These two domains are linked by a central stalk rotating inside the F(1) region and a stationary peripheral stalk (PubMed:12923572, PubMed:17570365, PubMed:17895376, PubMed:25851905). During catalysis, ATP synthesis in the catalytic domain of F(1) is coupled via a rotary mechanism of the central stalk subunits to proton translocation (PubMed:9687365). In vivo, can only synthesize ATP although its ATP hydrolase activity can be activated artificially in vitro (By similarity). With the subunit alpha (ATP5F1A), forms the catalytic core in the F(1) domain (By similarity).</text>
</comment>
<comment type="catalytic activity">
    <reaction evidence="12 18">
        <text>ATP + H2O + 4 H(+)(in) = ADP + phosphate + 5 H(+)(out)</text>
        <dbReference type="Rhea" id="RHEA:57720"/>
        <dbReference type="ChEBI" id="CHEBI:15377"/>
        <dbReference type="ChEBI" id="CHEBI:15378"/>
        <dbReference type="ChEBI" id="CHEBI:30616"/>
        <dbReference type="ChEBI" id="CHEBI:43474"/>
        <dbReference type="ChEBI" id="CHEBI:456216"/>
        <dbReference type="EC" id="7.1.2.2"/>
    </reaction>
    <physiologicalReaction direction="right-to-left" evidence="20 21">
        <dbReference type="Rhea" id="RHEA:57722"/>
    </physiologicalReaction>
</comment>
<comment type="subunit">
    <text evidence="2 3 5 6 8 9 11 12 13 15 16">Homotrimer (PubMed:17895376). Component of the ATP synthase complex composed at least of ATP5F1A/subunit alpha, ATP5F1B/subunit beta, ATP5MC1/subunit c (homooctomer), MT-ATP6/subunit a, MT-ATP8/subunit 8, ATP5ME/subunit e, ATP5MF/subunit f, ATP5MG/subunit g, ATP5MK/subunit k, ATP5MJ/subunit j, ATP5F1C/subunit gamma, ATP5F1D/subunit delta, ATP5F1E/subunit epsilon, ATP5PF/subunit F6, ATP5PB/subunit b, ATP5PD/subunit d, ATP5PO/subunit OSCP (PubMed:12923572, PubMed:17570365, PubMed:17895376, PubMed:23407638, PubMed:25851905, PubMed:8065448, PubMed:8790345). ATP synthase complex consists of a soluble F(1) head domain (subunits alpha(3) and beta(3)) - the catalytic core - and a membrane F(0) domain - the membrane proton channel (subunits c, a, 8, e, f, g, k and j) (By similarity) (PubMed:12923572, PubMed:17570365, PubMed:17895376, PubMed:25851905). These two domains are linked by a central stalk (subunits gamma, delta, and epsilon) rotating inside the F1 region and a stationary peripheral stalk (subunits F6, b, d, and OSCP) (PubMed:12923572, PubMed:17570365, PubMed:17895376, PubMed:25851905). Interacts with PPIF (PubMed:19801635). Interacts with BCL2L1 isoform BCL-X(L); the interaction mediates the association of BCL2L1 isoform BCL-X(L) with the mitochondrial membrane F(1)F(0) ATP synthase and enhances neurons metabolic efficiency (By similarity). Interacts with CLN5 and PPT1. Interacts with S100A1; this interaction increases F1-ATPase activity (By similarity). Interacts with MTLN. Interacts with TTC5/STRAP; the interaction results in decreased mitochondrial ATP production (By similarity).</text>
</comment>
<comment type="subcellular location">
    <subcellularLocation>
        <location evidence="7 12 14 15 17">Mitochondrion inner membrane</location>
        <topology evidence="7 12 14 15 17">Peripheral membrane protein</topology>
        <orientation evidence="7 17">Matrix side</orientation>
    </subcellularLocation>
</comment>
<comment type="similarity">
    <text evidence="19">Belongs to the ATPase alpha/beta chains family.</text>
</comment>
<evidence type="ECO:0000250" key="1"/>
<evidence type="ECO:0000250" key="2">
    <source>
        <dbReference type="UniProtKB" id="P06576"/>
    </source>
</evidence>
<evidence type="ECO:0000250" key="3">
    <source>
        <dbReference type="UniProtKB" id="P10719"/>
    </source>
</evidence>
<evidence type="ECO:0000250" key="4">
    <source>
        <dbReference type="UniProtKB" id="P19483"/>
    </source>
</evidence>
<evidence type="ECO:0000250" key="5">
    <source>
        <dbReference type="UniProtKB" id="P56480"/>
    </source>
</evidence>
<evidence type="ECO:0000269" key="6">
    <source>
    </source>
</evidence>
<evidence type="ECO:0000269" key="7">
    <source>
    </source>
</evidence>
<evidence type="ECO:0000269" key="8">
    <source>
    </source>
</evidence>
<evidence type="ECO:0000269" key="9">
    <source>
    </source>
</evidence>
<evidence type="ECO:0000269" key="10">
    <source>
    </source>
</evidence>
<evidence type="ECO:0000269" key="11">
    <source>
    </source>
</evidence>
<evidence type="ECO:0000269" key="12">
    <source>
    </source>
</evidence>
<evidence type="ECO:0000269" key="13">
    <source>
    </source>
</evidence>
<evidence type="ECO:0000269" key="14">
    <source>
    </source>
</evidence>
<evidence type="ECO:0000269" key="15">
    <source>
    </source>
</evidence>
<evidence type="ECO:0000269" key="16">
    <source>
    </source>
</evidence>
<evidence type="ECO:0000269" key="17">
    <source>
    </source>
</evidence>
<evidence type="ECO:0000269" key="18">
    <source>
    </source>
</evidence>
<evidence type="ECO:0000305" key="19"/>
<evidence type="ECO:0000305" key="20">
    <source>
    </source>
</evidence>
<evidence type="ECO:0000305" key="21">
    <source>
    </source>
</evidence>
<evidence type="ECO:0007744" key="22">
    <source>
        <dbReference type="PDB" id="1BMF"/>
    </source>
</evidence>
<evidence type="ECO:0007744" key="23">
    <source>
        <dbReference type="PDB" id="1E1R"/>
    </source>
</evidence>
<evidence type="ECO:0007744" key="24">
    <source>
        <dbReference type="PDB" id="1EFR"/>
    </source>
</evidence>
<evidence type="ECO:0007744" key="25">
    <source>
        <dbReference type="PDB" id="1H8E"/>
    </source>
</evidence>
<evidence type="ECO:0007744" key="26">
    <source>
        <dbReference type="PDB" id="1NBM"/>
    </source>
</evidence>
<evidence type="ECO:0007744" key="27">
    <source>
        <dbReference type="PDB" id="1OHH"/>
    </source>
</evidence>
<evidence type="ECO:0007744" key="28">
    <source>
        <dbReference type="PDB" id="2CK3"/>
    </source>
</evidence>
<evidence type="ECO:0007744" key="29">
    <source>
        <dbReference type="PDB" id="2V7Q"/>
    </source>
</evidence>
<evidence type="ECO:0007744" key="30">
    <source>
        <dbReference type="PDB" id="4ASU"/>
    </source>
</evidence>
<evidence type="ECO:0007744" key="31">
    <source>
        <dbReference type="PDB" id="4TSF"/>
    </source>
</evidence>
<evidence type="ECO:0007744" key="32">
    <source>
        <dbReference type="PDB" id="4Z1M"/>
    </source>
</evidence>
<evidence type="ECO:0007829" key="33">
    <source>
        <dbReference type="PDB" id="1W0K"/>
    </source>
</evidence>
<evidence type="ECO:0007829" key="34">
    <source>
        <dbReference type="PDB" id="4Z1M"/>
    </source>
</evidence>
<evidence type="ECO:0007829" key="35">
    <source>
        <dbReference type="PDB" id="6YY0"/>
    </source>
</evidence>
<proteinExistence type="evidence at protein level"/>
<dbReference type="EC" id="7.1.2.2" evidence="12 18"/>
<dbReference type="EMBL" id="M20929">
    <property type="protein sequence ID" value="AAA30395.1"/>
    <property type="molecule type" value="mRNA"/>
</dbReference>
<dbReference type="EMBL" id="BC116099">
    <property type="protein sequence ID" value="AAI16100.1"/>
    <property type="molecule type" value="mRNA"/>
</dbReference>
<dbReference type="EMBL" id="X05605">
    <property type="protein sequence ID" value="CAA29094.1"/>
    <property type="molecule type" value="mRNA"/>
</dbReference>
<dbReference type="PIR" id="A28717">
    <property type="entry name" value="PWBOB"/>
</dbReference>
<dbReference type="RefSeq" id="NP_786990.1">
    <property type="nucleotide sequence ID" value="NM_175796.3"/>
</dbReference>
<dbReference type="PDB" id="1BMF">
    <property type="method" value="X-ray"/>
    <property type="resolution" value="2.85 A"/>
    <property type="chains" value="D/E/F=47-528"/>
</dbReference>
<dbReference type="PDB" id="1COW">
    <property type="method" value="X-ray"/>
    <property type="resolution" value="3.10 A"/>
    <property type="chains" value="D/E/F=47-528"/>
</dbReference>
<dbReference type="PDB" id="1E1Q">
    <property type="method" value="X-ray"/>
    <property type="resolution" value="2.61 A"/>
    <property type="chains" value="D/E/F=47-528"/>
</dbReference>
<dbReference type="PDB" id="1E1R">
    <property type="method" value="X-ray"/>
    <property type="resolution" value="2.50 A"/>
    <property type="chains" value="D/E/F=47-528"/>
</dbReference>
<dbReference type="PDB" id="1E79">
    <property type="method" value="X-ray"/>
    <property type="resolution" value="2.40 A"/>
    <property type="chains" value="D/E/F=47-528"/>
</dbReference>
<dbReference type="PDB" id="1EFR">
    <property type="method" value="X-ray"/>
    <property type="resolution" value="3.10 A"/>
    <property type="chains" value="D/E/F=47-528"/>
</dbReference>
<dbReference type="PDB" id="1H8E">
    <property type="method" value="X-ray"/>
    <property type="resolution" value="2.00 A"/>
    <property type="chains" value="D/E/F=47-528"/>
</dbReference>
<dbReference type="PDB" id="1H8H">
    <property type="method" value="X-ray"/>
    <property type="resolution" value="2.90 A"/>
    <property type="chains" value="D/E/F=47-528"/>
</dbReference>
<dbReference type="PDB" id="1NBM">
    <property type="method" value="X-ray"/>
    <property type="resolution" value="3.00 A"/>
    <property type="chains" value="D/E/F=47-526"/>
</dbReference>
<dbReference type="PDB" id="1OHH">
    <property type="method" value="X-ray"/>
    <property type="resolution" value="2.80 A"/>
    <property type="chains" value="D/E/F=47-528"/>
</dbReference>
<dbReference type="PDB" id="1QO1">
    <property type="method" value="X-ray"/>
    <property type="resolution" value="3.90 A"/>
    <property type="chains" value="D/E/F=47-525"/>
</dbReference>
<dbReference type="PDB" id="1W0J">
    <property type="method" value="X-ray"/>
    <property type="resolution" value="2.20 A"/>
    <property type="chains" value="D/E/F=47-528"/>
</dbReference>
<dbReference type="PDB" id="1W0K">
    <property type="method" value="X-ray"/>
    <property type="resolution" value="2.85 A"/>
    <property type="chains" value="D/E/F=47-528"/>
</dbReference>
<dbReference type="PDB" id="2CK3">
    <property type="method" value="X-ray"/>
    <property type="resolution" value="1.90 A"/>
    <property type="chains" value="D/E/F=47-528"/>
</dbReference>
<dbReference type="PDB" id="2JDI">
    <property type="method" value="X-ray"/>
    <property type="resolution" value="1.90 A"/>
    <property type="chains" value="D/E/F=47-528"/>
</dbReference>
<dbReference type="PDB" id="2JIZ">
    <property type="method" value="X-ray"/>
    <property type="resolution" value="2.30 A"/>
    <property type="chains" value="D/E/F/K/L/M=47-528"/>
</dbReference>
<dbReference type="PDB" id="2JJ1">
    <property type="method" value="X-ray"/>
    <property type="resolution" value="2.70 A"/>
    <property type="chains" value="D/E/F/K/L/M=47-528"/>
</dbReference>
<dbReference type="PDB" id="2JJ2">
    <property type="method" value="X-ray"/>
    <property type="resolution" value="2.40 A"/>
    <property type="chains" value="D/E/F/K/L/M=47-528"/>
</dbReference>
<dbReference type="PDB" id="2V7Q">
    <property type="method" value="X-ray"/>
    <property type="resolution" value="2.10 A"/>
    <property type="chains" value="D/E/F=47-528"/>
</dbReference>
<dbReference type="PDB" id="2W6E">
    <property type="method" value="X-ray"/>
    <property type="resolution" value="6.50 A"/>
    <property type="chains" value="D/E/F=1-528"/>
</dbReference>
<dbReference type="PDB" id="2W6F">
    <property type="method" value="X-ray"/>
    <property type="resolution" value="6.00 A"/>
    <property type="chains" value="D/E/F=1-528"/>
</dbReference>
<dbReference type="PDB" id="2W6G">
    <property type="method" value="X-ray"/>
    <property type="resolution" value="6.00 A"/>
    <property type="chains" value="D/E/F=1-528"/>
</dbReference>
<dbReference type="PDB" id="2W6H">
    <property type="method" value="X-ray"/>
    <property type="resolution" value="5.00 A"/>
    <property type="chains" value="D/E/F=1-528"/>
</dbReference>
<dbReference type="PDB" id="2W6I">
    <property type="method" value="X-ray"/>
    <property type="resolution" value="4.00 A"/>
    <property type="chains" value="D/E/F=1-528"/>
</dbReference>
<dbReference type="PDB" id="2W6J">
    <property type="method" value="X-ray"/>
    <property type="resolution" value="3.84 A"/>
    <property type="chains" value="D/E/F=1-528"/>
</dbReference>
<dbReference type="PDB" id="2WSS">
    <property type="method" value="X-ray"/>
    <property type="resolution" value="3.20 A"/>
    <property type="chains" value="D/E/F/M/N/O=47-528"/>
</dbReference>
<dbReference type="PDB" id="2XND">
    <property type="method" value="X-ray"/>
    <property type="resolution" value="3.50 A"/>
    <property type="chains" value="D/E/F=59-525"/>
</dbReference>
<dbReference type="PDB" id="4ASU">
    <property type="method" value="X-ray"/>
    <property type="resolution" value="2.60 A"/>
    <property type="chains" value="D/E/F=49-528"/>
</dbReference>
<dbReference type="PDB" id="4TSF">
    <property type="method" value="X-ray"/>
    <property type="resolution" value="3.20 A"/>
    <property type="chains" value="D/E/F=49-528"/>
</dbReference>
<dbReference type="PDB" id="4TT3">
    <property type="method" value="X-ray"/>
    <property type="resolution" value="3.21 A"/>
    <property type="chains" value="D/E/F=49-528"/>
</dbReference>
<dbReference type="PDB" id="4YXW">
    <property type="method" value="X-ray"/>
    <property type="resolution" value="3.10 A"/>
    <property type="chains" value="D/E/F=47-528"/>
</dbReference>
<dbReference type="PDB" id="4Z1M">
    <property type="method" value="X-ray"/>
    <property type="resolution" value="3.30 A"/>
    <property type="chains" value="D/E/F=47-528"/>
</dbReference>
<dbReference type="PDB" id="5ARA">
    <property type="method" value="EM"/>
    <property type="resolution" value="6.70 A"/>
    <property type="chains" value="D/E/F=47-528"/>
</dbReference>
<dbReference type="PDB" id="5ARE">
    <property type="method" value="EM"/>
    <property type="resolution" value="7.40 A"/>
    <property type="chains" value="D/E/F=47-528"/>
</dbReference>
<dbReference type="PDB" id="5ARH">
    <property type="method" value="EM"/>
    <property type="resolution" value="7.20 A"/>
    <property type="chains" value="D/E/F=47-528"/>
</dbReference>
<dbReference type="PDB" id="5ARI">
    <property type="method" value="EM"/>
    <property type="resolution" value="7.40 A"/>
    <property type="chains" value="D/E/F=47-528"/>
</dbReference>
<dbReference type="PDB" id="5FIJ">
    <property type="method" value="EM"/>
    <property type="resolution" value="7.40 A"/>
    <property type="chains" value="D/E/F=47-528"/>
</dbReference>
<dbReference type="PDB" id="5FIK">
    <property type="method" value="EM"/>
    <property type="resolution" value="6.40 A"/>
    <property type="chains" value="D/E/F=47-528"/>
</dbReference>
<dbReference type="PDB" id="5FIL">
    <property type="method" value="EM"/>
    <property type="resolution" value="7.10 A"/>
    <property type="chains" value="D/E/F=47-528"/>
</dbReference>
<dbReference type="PDB" id="6YY0">
    <property type="method" value="EM"/>
    <property type="resolution" value="3.23 A"/>
    <property type="chains" value="D/E/F=47-528"/>
</dbReference>
<dbReference type="PDB" id="6Z1R">
    <property type="method" value="EM"/>
    <property type="resolution" value="3.29 A"/>
    <property type="chains" value="D/E/F=47-528"/>
</dbReference>
<dbReference type="PDB" id="6Z1U">
    <property type="method" value="EM"/>
    <property type="resolution" value="3.47 A"/>
    <property type="chains" value="D/E/F=47-528"/>
</dbReference>
<dbReference type="PDB" id="6ZPO">
    <property type="method" value="EM"/>
    <property type="resolution" value="4.00 A"/>
    <property type="chains" value="D/E/F=47-528"/>
</dbReference>
<dbReference type="PDB" id="6ZQM">
    <property type="method" value="EM"/>
    <property type="resolution" value="3.29 A"/>
    <property type="chains" value="D/E/F=47-528"/>
</dbReference>
<dbReference type="PDB" id="6ZQN">
    <property type="method" value="EM"/>
    <property type="resolution" value="4.00 A"/>
    <property type="chains" value="D/E/F=47-528"/>
</dbReference>
<dbReference type="PDB" id="7AJB">
    <property type="method" value="EM"/>
    <property type="resolution" value="9.20 A"/>
    <property type="chains" value="AD/AE/AF/D/E/F=47-528"/>
</dbReference>
<dbReference type="PDB" id="7AJC">
    <property type="method" value="EM"/>
    <property type="resolution" value="11.90 A"/>
    <property type="chains" value="AD/AE/AF/D/E/F=47-528"/>
</dbReference>
<dbReference type="PDB" id="7AJD">
    <property type="method" value="EM"/>
    <property type="resolution" value="9.00 A"/>
    <property type="chains" value="AD/AE/AF/D/E/F=47-528"/>
</dbReference>
<dbReference type="PDB" id="7AJE">
    <property type="method" value="EM"/>
    <property type="resolution" value="9.40 A"/>
    <property type="chains" value="AD/AE/AF/D/E/F=47-528"/>
</dbReference>
<dbReference type="PDB" id="7AJF">
    <property type="method" value="EM"/>
    <property type="resolution" value="8.45 A"/>
    <property type="chains" value="AD/AE/AF/D/E/F=47-528"/>
</dbReference>
<dbReference type="PDB" id="7AJG">
    <property type="method" value="EM"/>
    <property type="resolution" value="10.70 A"/>
    <property type="chains" value="AD/AE/AF/D/E/F=47-528"/>
</dbReference>
<dbReference type="PDB" id="7AJH">
    <property type="method" value="EM"/>
    <property type="resolution" value="9.70 A"/>
    <property type="chains" value="AD/AE/AF/D/E/F=47-528"/>
</dbReference>
<dbReference type="PDB" id="7AJI">
    <property type="method" value="EM"/>
    <property type="resolution" value="11.40 A"/>
    <property type="chains" value="AD/AE/AF/D/E/F=47-528"/>
</dbReference>
<dbReference type="PDB" id="7AJJ">
    <property type="method" value="EM"/>
    <property type="resolution" value="13.10 A"/>
    <property type="chains" value="AD/AE/AF/D/E/F=47-528"/>
</dbReference>
<dbReference type="PDBsum" id="1BMF"/>
<dbReference type="PDBsum" id="1COW"/>
<dbReference type="PDBsum" id="1E1Q"/>
<dbReference type="PDBsum" id="1E1R"/>
<dbReference type="PDBsum" id="1E79"/>
<dbReference type="PDBsum" id="1EFR"/>
<dbReference type="PDBsum" id="1H8E"/>
<dbReference type="PDBsum" id="1H8H"/>
<dbReference type="PDBsum" id="1NBM"/>
<dbReference type="PDBsum" id="1OHH"/>
<dbReference type="PDBsum" id="1QO1"/>
<dbReference type="PDBsum" id="1W0J"/>
<dbReference type="PDBsum" id="1W0K"/>
<dbReference type="PDBsum" id="2CK3"/>
<dbReference type="PDBsum" id="2JDI"/>
<dbReference type="PDBsum" id="2JIZ"/>
<dbReference type="PDBsum" id="2JJ1"/>
<dbReference type="PDBsum" id="2JJ2"/>
<dbReference type="PDBsum" id="2V7Q"/>
<dbReference type="PDBsum" id="2W6E"/>
<dbReference type="PDBsum" id="2W6F"/>
<dbReference type="PDBsum" id="2W6G"/>
<dbReference type="PDBsum" id="2W6H"/>
<dbReference type="PDBsum" id="2W6I"/>
<dbReference type="PDBsum" id="2W6J"/>
<dbReference type="PDBsum" id="2WSS"/>
<dbReference type="PDBsum" id="2XND"/>
<dbReference type="PDBsum" id="4ASU"/>
<dbReference type="PDBsum" id="4TSF"/>
<dbReference type="PDBsum" id="4TT3"/>
<dbReference type="PDBsum" id="4YXW"/>
<dbReference type="PDBsum" id="4Z1M"/>
<dbReference type="PDBsum" id="5ARA"/>
<dbReference type="PDBsum" id="5ARE"/>
<dbReference type="PDBsum" id="5ARH"/>
<dbReference type="PDBsum" id="5ARI"/>
<dbReference type="PDBsum" id="5FIJ"/>
<dbReference type="PDBsum" id="5FIK"/>
<dbReference type="PDBsum" id="5FIL"/>
<dbReference type="PDBsum" id="6YY0"/>
<dbReference type="PDBsum" id="6Z1R"/>
<dbReference type="PDBsum" id="6Z1U"/>
<dbReference type="PDBsum" id="6ZPO"/>
<dbReference type="PDBsum" id="6ZQM"/>
<dbReference type="PDBsum" id="6ZQN"/>
<dbReference type="PDBsum" id="7AJB"/>
<dbReference type="PDBsum" id="7AJC"/>
<dbReference type="PDBsum" id="7AJD"/>
<dbReference type="PDBsum" id="7AJE"/>
<dbReference type="PDBsum" id="7AJF"/>
<dbReference type="PDBsum" id="7AJG"/>
<dbReference type="PDBsum" id="7AJH"/>
<dbReference type="PDBsum" id="7AJI"/>
<dbReference type="PDBsum" id="7AJJ"/>
<dbReference type="EMDB" id="EMD-11001"/>
<dbReference type="EMDB" id="EMD-11039"/>
<dbReference type="EMDB" id="EMD-11040"/>
<dbReference type="EMDB" id="EMD-11342"/>
<dbReference type="EMDB" id="EMD-11368"/>
<dbReference type="EMDB" id="EMD-11369"/>
<dbReference type="EMDB" id="EMD-11428"/>
<dbReference type="EMDB" id="EMD-11429"/>
<dbReference type="EMDB" id="EMD-11430"/>
<dbReference type="EMDB" id="EMD-3164"/>
<dbReference type="EMDB" id="EMD-3165"/>
<dbReference type="EMDB" id="EMD-3166"/>
<dbReference type="EMDB" id="EMD-3167"/>
<dbReference type="EMDB" id="EMD-3168"/>
<dbReference type="EMDB" id="EMD-3169"/>
<dbReference type="EMDB" id="EMD-3170"/>
<dbReference type="SMR" id="P00829"/>
<dbReference type="CORUM" id="P00829"/>
<dbReference type="DIP" id="DIP-35476N"/>
<dbReference type="FunCoup" id="P00829">
    <property type="interactions" value="1466"/>
</dbReference>
<dbReference type="IntAct" id="P00829">
    <property type="interactions" value="10"/>
</dbReference>
<dbReference type="MINT" id="P00829"/>
<dbReference type="STRING" id="9913.ENSBTAP00000017710"/>
<dbReference type="BindingDB" id="P00829"/>
<dbReference type="ChEMBL" id="CHEMBL4879425"/>
<dbReference type="GlyCosmos" id="P00829">
    <property type="glycosylation" value="1 site, No reported glycans"/>
</dbReference>
<dbReference type="GlyGen" id="P00829">
    <property type="glycosylation" value="2 sites, 1 O-linked glycan (1 site)"/>
</dbReference>
<dbReference type="SwissPalm" id="P00829"/>
<dbReference type="PaxDb" id="9913-ENSBTAP00000017710"/>
<dbReference type="PeptideAtlas" id="P00829"/>
<dbReference type="GeneID" id="327675"/>
<dbReference type="KEGG" id="bta:327675"/>
<dbReference type="CTD" id="506"/>
<dbReference type="eggNOG" id="KOG1350">
    <property type="taxonomic scope" value="Eukaryota"/>
</dbReference>
<dbReference type="HOGENOM" id="CLU_022398_0_2_1"/>
<dbReference type="InParanoid" id="P00829"/>
<dbReference type="OrthoDB" id="14523at2759"/>
<dbReference type="TreeFam" id="TF105640"/>
<dbReference type="CD-CODE" id="D7FE2080">
    <property type="entry name" value="Nucleolus"/>
</dbReference>
<dbReference type="EvolutionaryTrace" id="P00829"/>
<dbReference type="PRO" id="PR:P00829"/>
<dbReference type="Proteomes" id="UP000009136">
    <property type="component" value="Unplaced"/>
</dbReference>
<dbReference type="GO" id="GO:0005743">
    <property type="term" value="C:mitochondrial inner membrane"/>
    <property type="evidence" value="ECO:0007669"/>
    <property type="project" value="UniProtKB-SubCell"/>
</dbReference>
<dbReference type="GO" id="GO:0005739">
    <property type="term" value="C:mitochondrion"/>
    <property type="evidence" value="ECO:0000305"/>
    <property type="project" value="UniProtKB"/>
</dbReference>
<dbReference type="GO" id="GO:0045259">
    <property type="term" value="C:proton-transporting ATP synthase complex"/>
    <property type="evidence" value="ECO:0000314"/>
    <property type="project" value="UniProtKB"/>
</dbReference>
<dbReference type="GO" id="GO:0005524">
    <property type="term" value="F:ATP binding"/>
    <property type="evidence" value="ECO:0007669"/>
    <property type="project" value="UniProtKB-KW"/>
</dbReference>
<dbReference type="GO" id="GO:0016887">
    <property type="term" value="F:ATP hydrolysis activity"/>
    <property type="evidence" value="ECO:0000315"/>
    <property type="project" value="UniProtKB"/>
</dbReference>
<dbReference type="GO" id="GO:0046933">
    <property type="term" value="F:proton-transporting ATP synthase activity, rotational mechanism"/>
    <property type="evidence" value="ECO:0007669"/>
    <property type="project" value="InterPro"/>
</dbReference>
<dbReference type="GO" id="GO:0015986">
    <property type="term" value="P:proton motive force-driven ATP synthesis"/>
    <property type="evidence" value="ECO:0000250"/>
    <property type="project" value="UniProtKB"/>
</dbReference>
<dbReference type="GO" id="GO:0042776">
    <property type="term" value="P:proton motive force-driven mitochondrial ATP synthesis"/>
    <property type="evidence" value="ECO:0000318"/>
    <property type="project" value="GO_Central"/>
</dbReference>
<dbReference type="CDD" id="cd18110">
    <property type="entry name" value="ATP-synt_F1_beta_C"/>
    <property type="match status" value="1"/>
</dbReference>
<dbReference type="CDD" id="cd18115">
    <property type="entry name" value="ATP-synt_F1_beta_N"/>
    <property type="match status" value="1"/>
</dbReference>
<dbReference type="CDD" id="cd01133">
    <property type="entry name" value="F1-ATPase_beta_CD"/>
    <property type="match status" value="1"/>
</dbReference>
<dbReference type="FunFam" id="1.10.1140.10:FF:000001">
    <property type="entry name" value="ATP synthase subunit beta"/>
    <property type="match status" value="1"/>
</dbReference>
<dbReference type="FunFam" id="2.40.10.170:FF:000004">
    <property type="entry name" value="ATP synthase subunit beta"/>
    <property type="match status" value="1"/>
</dbReference>
<dbReference type="FunFam" id="3.40.50.12240:FF:000006">
    <property type="entry name" value="ATP synthase subunit beta"/>
    <property type="match status" value="1"/>
</dbReference>
<dbReference type="FunFam" id="3.40.50.300:FF:000026">
    <property type="entry name" value="ATP synthase subunit beta"/>
    <property type="match status" value="1"/>
</dbReference>
<dbReference type="Gene3D" id="2.40.10.170">
    <property type="match status" value="1"/>
</dbReference>
<dbReference type="Gene3D" id="1.10.1140.10">
    <property type="entry name" value="Bovine Mitochondrial F1-atpase, Atp Synthase Beta Chain, Chain D, domain 3"/>
    <property type="match status" value="1"/>
</dbReference>
<dbReference type="Gene3D" id="3.40.50.300">
    <property type="entry name" value="P-loop containing nucleotide triphosphate hydrolases"/>
    <property type="match status" value="1"/>
</dbReference>
<dbReference type="HAMAP" id="MF_01347">
    <property type="entry name" value="ATP_synth_beta_bact"/>
    <property type="match status" value="1"/>
</dbReference>
<dbReference type="InterPro" id="IPR003593">
    <property type="entry name" value="AAA+_ATPase"/>
</dbReference>
<dbReference type="InterPro" id="IPR055190">
    <property type="entry name" value="ATP-synt_VA_C"/>
</dbReference>
<dbReference type="InterPro" id="IPR005722">
    <property type="entry name" value="ATP_synth_F1_bsu"/>
</dbReference>
<dbReference type="InterPro" id="IPR020003">
    <property type="entry name" value="ATPase_a/bsu_AS"/>
</dbReference>
<dbReference type="InterPro" id="IPR050053">
    <property type="entry name" value="ATPase_alpha/beta_chains"/>
</dbReference>
<dbReference type="InterPro" id="IPR004100">
    <property type="entry name" value="ATPase_F1/V1/A1_a/bsu_N"/>
</dbReference>
<dbReference type="InterPro" id="IPR036121">
    <property type="entry name" value="ATPase_F1/V1/A1_a/bsu_N_sf"/>
</dbReference>
<dbReference type="InterPro" id="IPR000194">
    <property type="entry name" value="ATPase_F1/V1/A1_a/bsu_nucl-bd"/>
</dbReference>
<dbReference type="InterPro" id="IPR024034">
    <property type="entry name" value="ATPase_F1/V1_b/a_C"/>
</dbReference>
<dbReference type="InterPro" id="IPR027417">
    <property type="entry name" value="P-loop_NTPase"/>
</dbReference>
<dbReference type="NCBIfam" id="TIGR01039">
    <property type="entry name" value="atpD"/>
    <property type="match status" value="1"/>
</dbReference>
<dbReference type="PANTHER" id="PTHR15184">
    <property type="entry name" value="ATP SYNTHASE"/>
    <property type="match status" value="1"/>
</dbReference>
<dbReference type="PANTHER" id="PTHR15184:SF71">
    <property type="entry name" value="ATP SYNTHASE SUBUNIT BETA, MITOCHONDRIAL"/>
    <property type="match status" value="1"/>
</dbReference>
<dbReference type="Pfam" id="PF00006">
    <property type="entry name" value="ATP-synt_ab"/>
    <property type="match status" value="1"/>
</dbReference>
<dbReference type="Pfam" id="PF02874">
    <property type="entry name" value="ATP-synt_ab_N"/>
    <property type="match status" value="1"/>
</dbReference>
<dbReference type="Pfam" id="PF22919">
    <property type="entry name" value="ATP-synt_VA_C"/>
    <property type="match status" value="1"/>
</dbReference>
<dbReference type="PIRSF" id="PIRSF039072">
    <property type="entry name" value="ATPase_subunit_beta"/>
    <property type="match status" value="1"/>
</dbReference>
<dbReference type="SMART" id="SM00382">
    <property type="entry name" value="AAA"/>
    <property type="match status" value="1"/>
</dbReference>
<dbReference type="SUPFAM" id="SSF47917">
    <property type="entry name" value="C-terminal domain of alpha and beta subunits of F1 ATP synthase"/>
    <property type="match status" value="1"/>
</dbReference>
<dbReference type="SUPFAM" id="SSF50615">
    <property type="entry name" value="N-terminal domain of alpha and beta subunits of F1 ATP synthase"/>
    <property type="match status" value="1"/>
</dbReference>
<dbReference type="SUPFAM" id="SSF52540">
    <property type="entry name" value="P-loop containing nucleoside triphosphate hydrolases"/>
    <property type="match status" value="1"/>
</dbReference>
<dbReference type="PROSITE" id="PS00152">
    <property type="entry name" value="ATPASE_ALPHA_BETA"/>
    <property type="match status" value="1"/>
</dbReference>
<keyword id="KW-0002">3D-structure</keyword>
<keyword id="KW-0007">Acetylation</keyword>
<keyword id="KW-0066">ATP synthesis</keyword>
<keyword id="KW-0067">ATP-binding</keyword>
<keyword id="KW-0139">CF(1)</keyword>
<keyword id="KW-0903">Direct protein sequencing</keyword>
<keyword id="KW-0325">Glycoprotein</keyword>
<keyword id="KW-0375">Hydrogen ion transport</keyword>
<keyword id="KW-0406">Ion transport</keyword>
<keyword id="KW-0460">Magnesium</keyword>
<keyword id="KW-0472">Membrane</keyword>
<keyword id="KW-0479">Metal-binding</keyword>
<keyword id="KW-0496">Mitochondrion</keyword>
<keyword id="KW-0999">Mitochondrion inner membrane</keyword>
<keyword id="KW-0547">Nucleotide-binding</keyword>
<keyword id="KW-0597">Phosphoprotein</keyword>
<keyword id="KW-1185">Reference proteome</keyword>
<keyword id="KW-0809">Transit peptide</keyword>
<keyword id="KW-1278">Translocase</keyword>
<keyword id="KW-0813">Transport</keyword>